<protein>
    <recommendedName>
        <fullName evidence="6">2-oxoglutarate-dependent dioxygenase eupC</fullName>
        <ecNumber evidence="8">1.14.11.-</ecNumber>
    </recommendedName>
    <alternativeName>
        <fullName evidence="6">Eupenifeldin biosynthesis cluster protein C</fullName>
    </alternativeName>
</protein>
<proteinExistence type="evidence at protein level"/>
<reference key="1">
    <citation type="journal article" date="2019" name="Fungal Genet. Biol.">
        <title>Identification of the gene cluster for bistropolone-humulene meroterpenoid biosynthesis in Phoma sp.</title>
        <authorList>
            <person name="Zhai Y."/>
            <person name="Li Y."/>
            <person name="Zhang J."/>
            <person name="Zhang Y."/>
            <person name="Ren F."/>
            <person name="Zhang X."/>
            <person name="Liu G."/>
            <person name="Liu X."/>
            <person name="Che Y."/>
        </authorList>
    </citation>
    <scope>NUCLEOTIDE SEQUENCE [GENOMIC DNA]</scope>
    <scope>FUNCTION</scope>
    <scope>DISRUPTION PHENOTYPE</scope>
    <scope>PATHWAY</scope>
    <source>
        <strain>XZ068 / CGMCC No. 10481</strain>
    </source>
</reference>
<reference key="2">
    <citation type="journal article" date="1993" name="J. Antibiot.">
        <title>Eupenifeldin, a novel cytotoxic bistropolone from Eupenicillium brefeldianum.</title>
        <authorList>
            <person name="Mayerl F."/>
            <person name="Gao Q."/>
            <person name="Huang S."/>
            <person name="Klohr S.E."/>
            <person name="Matson J.A."/>
            <person name="Gustavson D.R."/>
            <person name="Pirnik D.M."/>
            <person name="Berry R.L."/>
            <person name="Fairchild C."/>
            <person name="Rose W.C."/>
        </authorList>
    </citation>
    <scope>BIOTECHNOLOGY</scope>
</reference>
<reference key="3">
    <citation type="journal article" date="2008" name="J. Nat. Prod.">
        <title>Noreupenifeldin, a tropolone from an unidentified ascomycete.</title>
        <authorList>
            <person name="Ayers S."/>
            <person name="Zink D.L."/>
            <person name="Powell J.S."/>
            <person name="Brown C.M."/>
            <person name="Grund A."/>
            <person name="Bills G.F."/>
            <person name="Platas G."/>
            <person name="Thompson D."/>
            <person name="Singh S.B."/>
        </authorList>
    </citation>
    <scope>BIOTECHNOLOGY</scope>
</reference>
<reference key="4">
    <citation type="journal article" date="2008" name="Phytochem. Lett.">
        <title>Ramiferin, a bisphenol-sesquiterpene from the fungus Kionochaeta ramifera BCC 7585.</title>
        <authorList>
            <person name="Bunyapaiboonsri T."/>
            <person name="Veeranondha S."/>
            <person name="Boonruangprapa T."/>
            <person name="Somrithipol S."/>
        </authorList>
    </citation>
    <scope>BIOTECHNOLOGY</scope>
</reference>
<comment type="function">
    <text evidence="3 8">2-oxoglutarate-dependent dioxygenase; part of the gene cluster that mediates the biosynthesis of eupenifeldin, a bistropolone meroterpenoid that acts as an antitumor agent (PubMed:30980906). The first step of eupenifeldin biosynthesis is the biosynthesis of 3-methylorcinaldehyde performed by the non-reducing polyketide synthase eupA (PubMed:30980906). Oxidative dearomatization of 3-methylorcinaldehyde likely catalyzed by the FAD-dependent monooxygenase eupB is followed by oxidative ring expansion by the 2-oxoglutarate-dependent dioxygenase eupC to provide the first tropolone metabolite, tropolone stipitaldehyde (Probable). In parallel, generation of sesquiterpene alpha-humulene from farnesylpyrophosphate (FPP) is catalyzed by the terpene cyclase eupE (PubMed:30980906). The cytochrome P450 monooxygenase eupD then hydroxylates humulene to humulenol (PubMed:30980906). The putative Diels-Alderase eupF probably catalyzes the formation of the tropolone-humulene skeleton by linking humulenol and the polyketide moiety (Probable). The short-chain dehydrogenase/reductase eupG and the flavin-dependent monooxygenase eupH are also essential for eupenifeldin biosynthesis and are likely the additional decorating enzymes of the tropolone-humulene skeleton to produce final eupenifeldin or derivatives (Probable).</text>
</comment>
<comment type="cofactor">
    <cofactor evidence="1">
        <name>Fe(2+)</name>
        <dbReference type="ChEBI" id="CHEBI:29033"/>
    </cofactor>
    <text evidence="1">Binds 1 Fe(2+) ion per subunit.</text>
</comment>
<comment type="pathway">
    <text evidence="3">Secondary metabolite biosynthesis; terpenoid biosynthesis.</text>
</comment>
<comment type="disruption phenotype">
    <text evidence="3">Abolishes the production of eupenifeldin.</text>
</comment>
<comment type="biotechnology">
    <text evidence="2 4 5">Eupenifeldin is a bistropolone-humulene meroterpenoid first discovered as an antitumor and anti-leukemia agent (PubMed:8360103). This metabolite also shows anthelmintic activity against the parasitic worm Hemonchus contortus, anti-malarial activity as well as antifungal activity (PubMed:18095654, Ref.4).</text>
</comment>
<comment type="similarity">
    <text evidence="7">Belongs to the iron/ascorbate-dependent oxidoreductase family.</text>
</comment>
<dbReference type="EC" id="1.14.11.-" evidence="8"/>
<dbReference type="EMBL" id="MK400120">
    <property type="protein sequence ID" value="QCO93106.1"/>
    <property type="molecule type" value="Genomic_DNA"/>
</dbReference>
<dbReference type="SMR" id="A0A4P8GG75"/>
<dbReference type="UniPathway" id="UPA00213"/>
<dbReference type="GO" id="GO:0051213">
    <property type="term" value="F:dioxygenase activity"/>
    <property type="evidence" value="ECO:0007669"/>
    <property type="project" value="UniProtKB-KW"/>
</dbReference>
<dbReference type="GO" id="GO:0046872">
    <property type="term" value="F:metal ion binding"/>
    <property type="evidence" value="ECO:0007669"/>
    <property type="project" value="UniProtKB-KW"/>
</dbReference>
<dbReference type="GO" id="GO:0016114">
    <property type="term" value="P:terpenoid biosynthetic process"/>
    <property type="evidence" value="ECO:0007669"/>
    <property type="project" value="UniProtKB-UniPathway"/>
</dbReference>
<dbReference type="Gene3D" id="2.60.120.330">
    <property type="entry name" value="B-lactam Antibiotic, Isopenicillin N Synthase, Chain"/>
    <property type="match status" value="1"/>
</dbReference>
<dbReference type="InterPro" id="IPR026992">
    <property type="entry name" value="DIOX_N"/>
</dbReference>
<dbReference type="InterPro" id="IPR044861">
    <property type="entry name" value="IPNS-like_FE2OG_OXY"/>
</dbReference>
<dbReference type="InterPro" id="IPR027443">
    <property type="entry name" value="IPNS-like_sf"/>
</dbReference>
<dbReference type="PANTHER" id="PTHR10209:SF804">
    <property type="entry name" value="FE2OG DIOXYGENASE DOMAIN-CONTAINING PROTEIN"/>
    <property type="match status" value="1"/>
</dbReference>
<dbReference type="PANTHER" id="PTHR10209">
    <property type="entry name" value="OXIDOREDUCTASE, 2OG-FE II OXYGENASE FAMILY PROTEIN"/>
    <property type="match status" value="1"/>
</dbReference>
<dbReference type="Pfam" id="PF03171">
    <property type="entry name" value="2OG-FeII_Oxy"/>
    <property type="match status" value="1"/>
</dbReference>
<dbReference type="Pfam" id="PF14226">
    <property type="entry name" value="DIOX_N"/>
    <property type="match status" value="1"/>
</dbReference>
<dbReference type="SUPFAM" id="SSF51197">
    <property type="entry name" value="Clavaminate synthase-like"/>
    <property type="match status" value="1"/>
</dbReference>
<sequence length="313" mass="34976">MEIANTQAAIPTIDISALLSPTASEQSRQTVINNMSDACHAYGFFNLVGHDIPPEAMRDALDCNKLFFALPQDRKMEVSIDKSIGRSFRGYEPPGIQTHHEGLLPDTKETFMVGREVMEGDPDCGSFSTGPNLWPSDLHKKGFQDRVMSYQARMLRLVETILDCLALGLPKSWNCTSHVFKPLLNKPSIPMRFLHYGPVEIHDDRQFGVADHTDFGFVSILLQEAGTSGLEVFYPPTKSWVPVPVFEQGFVINMGDMMQKHRHSVAFFLNGDLKLNAKALDGSGHETIVGEQIQQRLIETMGMTGNLLRRELV</sequence>
<feature type="chain" id="PRO_0000449154" description="2-oxoglutarate-dependent dioxygenase eupC">
    <location>
        <begin position="1"/>
        <end position="313"/>
    </location>
</feature>
<feature type="domain" description="Fe2OG dioxygenase" evidence="1">
    <location>
        <begin position="187"/>
        <end position="284"/>
    </location>
</feature>
<feature type="binding site" evidence="1">
    <location>
        <position position="212"/>
    </location>
    <ligand>
        <name>Fe cation</name>
        <dbReference type="ChEBI" id="CHEBI:24875"/>
    </ligand>
</feature>
<feature type="binding site" evidence="1">
    <location>
        <position position="214"/>
    </location>
    <ligand>
        <name>Fe cation</name>
        <dbReference type="ChEBI" id="CHEBI:24875"/>
    </ligand>
</feature>
<feature type="binding site" evidence="1">
    <location>
        <position position="263"/>
    </location>
    <ligand>
        <name>Fe cation</name>
        <dbReference type="ChEBI" id="CHEBI:24875"/>
    </ligand>
</feature>
<feature type="binding site" evidence="1">
    <location>
        <position position="274"/>
    </location>
    <ligand>
        <name>2-oxoglutarate</name>
        <dbReference type="ChEBI" id="CHEBI:16810"/>
    </ligand>
</feature>
<name>EUPC_PHOSX</name>
<keyword id="KW-0223">Dioxygenase</keyword>
<keyword id="KW-0408">Iron</keyword>
<keyword id="KW-0479">Metal-binding</keyword>
<keyword id="KW-0560">Oxidoreductase</keyword>
<accession>A0A4P8GG75</accession>
<gene>
    <name evidence="6" type="primary">eupC</name>
    <name type="ORF">gme12628</name>
</gene>
<organism>
    <name type="scientific">Phoma sp</name>
    <dbReference type="NCBI Taxonomy" id="1707701"/>
    <lineage>
        <taxon>Eukaryota</taxon>
        <taxon>Fungi</taxon>
        <taxon>Dikarya</taxon>
        <taxon>Ascomycota</taxon>
        <taxon>Pezizomycotina</taxon>
        <taxon>Dothideomycetes</taxon>
        <taxon>Pleosporomycetidae</taxon>
        <taxon>Pleosporales</taxon>
        <taxon>Pleosporineae</taxon>
        <taxon>Didymellaceae</taxon>
        <taxon>Phoma</taxon>
    </lineage>
</organism>
<evidence type="ECO:0000255" key="1">
    <source>
        <dbReference type="PROSITE-ProRule" id="PRU00805"/>
    </source>
</evidence>
<evidence type="ECO:0000269" key="2">
    <source>
    </source>
</evidence>
<evidence type="ECO:0000269" key="3">
    <source>
    </source>
</evidence>
<evidence type="ECO:0000269" key="4">
    <source>
    </source>
</evidence>
<evidence type="ECO:0000269" key="5">
    <source ref="4"/>
</evidence>
<evidence type="ECO:0000303" key="6">
    <source>
    </source>
</evidence>
<evidence type="ECO:0000305" key="7"/>
<evidence type="ECO:0000305" key="8">
    <source>
    </source>
</evidence>